<name>PGK_DICDI</name>
<feature type="chain" id="PRO_0000293630" description="Phosphoglycerate kinase">
    <location>
        <begin position="1"/>
        <end position="420"/>
    </location>
</feature>
<feature type="region of interest" description="Calmodulin binding" evidence="7">
    <location>
        <begin position="209"/>
        <end position="228"/>
    </location>
</feature>
<feature type="binding site" evidence="1">
    <location>
        <position position="26"/>
    </location>
    <ligand>
        <name>(2R)-3-phosphoglycerate</name>
        <dbReference type="ChEBI" id="CHEBI:58272"/>
    </ligand>
</feature>
<feature type="binding site" evidence="3">
    <location>
        <position position="27"/>
    </location>
    <ligand>
        <name>(2R)-3-phosphoglycerate</name>
        <dbReference type="ChEBI" id="CHEBI:58272"/>
    </ligand>
</feature>
<feature type="binding site" evidence="1">
    <location>
        <position position="28"/>
    </location>
    <ligand>
        <name>(2R)-3-phosphoglycerate</name>
        <dbReference type="ChEBI" id="CHEBI:58272"/>
    </ligand>
</feature>
<feature type="binding site" evidence="3">
    <location>
        <position position="29"/>
    </location>
    <ligand>
        <name>(2R)-3-phosphoglycerate</name>
        <dbReference type="ChEBI" id="CHEBI:58272"/>
    </ligand>
</feature>
<feature type="binding site" evidence="1">
    <location>
        <position position="42"/>
    </location>
    <ligand>
        <name>(2R)-3-phosphoglycerate</name>
        <dbReference type="ChEBI" id="CHEBI:58272"/>
    </ligand>
</feature>
<feature type="binding site" evidence="3">
    <location>
        <position position="43"/>
    </location>
    <ligand>
        <name>(2R)-3-phosphoglycerate</name>
        <dbReference type="ChEBI" id="CHEBI:58272"/>
    </ligand>
</feature>
<feature type="binding site" evidence="1">
    <location>
        <position position="66"/>
    </location>
    <ligand>
        <name>(2R)-3-phosphoglycerate</name>
        <dbReference type="ChEBI" id="CHEBI:58272"/>
    </ligand>
</feature>
<feature type="binding site" evidence="3">
    <location>
        <position position="67"/>
    </location>
    <ligand>
        <name>(2R)-3-phosphoglycerate</name>
        <dbReference type="ChEBI" id="CHEBI:58272"/>
    </ligand>
</feature>
<feature type="binding site" evidence="1">
    <location>
        <position position="69"/>
    </location>
    <ligand>
        <name>(2R)-3-phosphoglycerate</name>
        <dbReference type="ChEBI" id="CHEBI:58272"/>
    </ligand>
</feature>
<feature type="binding site" evidence="3">
    <location>
        <position position="70"/>
    </location>
    <ligand>
        <name>(2R)-3-phosphoglycerate</name>
        <dbReference type="ChEBI" id="CHEBI:58272"/>
    </ligand>
</feature>
<feature type="binding site" evidence="1">
    <location>
        <position position="125"/>
    </location>
    <ligand>
        <name>(2R)-3-phosphoglycerate</name>
        <dbReference type="ChEBI" id="CHEBI:58272"/>
    </ligand>
</feature>
<feature type="binding site" evidence="3">
    <location>
        <position position="126"/>
    </location>
    <ligand>
        <name>(2R)-3-phosphoglycerate</name>
        <dbReference type="ChEBI" id="CHEBI:58272"/>
    </ligand>
</feature>
<feature type="binding site" evidence="1">
    <location>
        <position position="173"/>
    </location>
    <ligand>
        <name>(2R)-3-phosphoglycerate</name>
        <dbReference type="ChEBI" id="CHEBI:58272"/>
    </ligand>
</feature>
<feature type="binding site" evidence="3">
    <location>
        <position position="174"/>
    </location>
    <ligand>
        <name>(2R)-3-phosphoglycerate</name>
        <dbReference type="ChEBI" id="CHEBI:58272"/>
    </ligand>
</feature>
<feature type="binding site" evidence="1">
    <location>
        <position position="217"/>
    </location>
    <ligand>
        <name>ADP</name>
        <dbReference type="ChEBI" id="CHEBI:456216"/>
    </ligand>
</feature>
<feature type="binding site" evidence="1">
    <location>
        <position position="217"/>
    </location>
    <ligand>
        <name>CDP</name>
        <dbReference type="ChEBI" id="CHEBI:58069"/>
    </ligand>
</feature>
<feature type="binding site" evidence="3">
    <location>
        <position position="218"/>
    </location>
    <ligand>
        <name>AMP</name>
        <dbReference type="ChEBI" id="CHEBI:456215"/>
    </ligand>
</feature>
<feature type="binding site" evidence="3">
    <location>
        <position position="218"/>
    </location>
    <ligand>
        <name>ATP</name>
        <dbReference type="ChEBI" id="CHEBI:30616"/>
    </ligand>
</feature>
<feature type="binding site" evidence="1">
    <location>
        <position position="218"/>
    </location>
    <ligand>
        <name>Mg(2+)</name>
        <dbReference type="ChEBI" id="CHEBI:18420"/>
    </ligand>
</feature>
<feature type="binding site" evidence="3">
    <location>
        <position position="219"/>
    </location>
    <ligand>
        <name>AMP</name>
        <dbReference type="ChEBI" id="CHEBI:456215"/>
    </ligand>
</feature>
<feature type="binding site" evidence="1">
    <location>
        <position position="222"/>
    </location>
    <ligand>
        <name>CDP</name>
        <dbReference type="ChEBI" id="CHEBI:58069"/>
    </ligand>
</feature>
<feature type="binding site" evidence="1">
    <location>
        <position position="222"/>
    </location>
    <ligand>
        <name>Mg(2+)</name>
        <dbReference type="ChEBI" id="CHEBI:18420"/>
    </ligand>
</feature>
<feature type="binding site" evidence="3">
    <location>
        <position position="223"/>
    </location>
    <ligand>
        <name>AMP</name>
        <dbReference type="ChEBI" id="CHEBI:456215"/>
    </ligand>
</feature>
<feature type="binding site" evidence="1">
    <location>
        <position position="223"/>
    </location>
    <ligand>
        <name>ATP</name>
        <dbReference type="ChEBI" id="CHEBI:30616"/>
    </ligand>
</feature>
<feature type="binding site" evidence="1">
    <location>
        <position position="241"/>
    </location>
    <ligand>
        <name>ADP</name>
        <dbReference type="ChEBI" id="CHEBI:456216"/>
    </ligand>
</feature>
<feature type="binding site" evidence="1">
    <location>
        <position position="241"/>
    </location>
    <ligand>
        <name>CDP</name>
        <dbReference type="ChEBI" id="CHEBI:58069"/>
    </ligand>
</feature>
<feature type="binding site" evidence="3">
    <location>
        <position position="242"/>
    </location>
    <ligand>
        <name>AMP</name>
        <dbReference type="ChEBI" id="CHEBI:456215"/>
    </ligand>
</feature>
<feature type="binding site" evidence="3">
    <location>
        <position position="242"/>
    </location>
    <ligand>
        <name>ATP</name>
        <dbReference type="ChEBI" id="CHEBI:30616"/>
    </ligand>
</feature>
<feature type="binding site" evidence="3">
    <location>
        <position position="316"/>
    </location>
    <ligand>
        <name>AMP</name>
        <dbReference type="ChEBI" id="CHEBI:456215"/>
    </ligand>
</feature>
<feature type="binding site" evidence="1">
    <location>
        <position position="316"/>
    </location>
    <ligand>
        <name>ATP</name>
        <dbReference type="ChEBI" id="CHEBI:30616"/>
    </ligand>
</feature>
<feature type="binding site" evidence="1">
    <location>
        <position position="341"/>
    </location>
    <ligand>
        <name>CDP</name>
        <dbReference type="ChEBI" id="CHEBI:58069"/>
    </ligand>
</feature>
<feature type="binding site" evidence="1">
    <location>
        <position position="346"/>
    </location>
    <ligand>
        <name>ADP</name>
        <dbReference type="ChEBI" id="CHEBI:456216"/>
    </ligand>
</feature>
<feature type="binding site" evidence="1">
    <location>
        <position position="346"/>
    </location>
    <ligand>
        <name>CDP</name>
        <dbReference type="ChEBI" id="CHEBI:58069"/>
    </ligand>
</feature>
<feature type="binding site" evidence="3">
    <location>
        <position position="347"/>
    </location>
    <ligand>
        <name>AMP</name>
        <dbReference type="ChEBI" id="CHEBI:456215"/>
    </ligand>
</feature>
<feature type="binding site" evidence="1">
    <location>
        <position position="347"/>
    </location>
    <ligand>
        <name>ATP</name>
        <dbReference type="ChEBI" id="CHEBI:30616"/>
    </ligand>
</feature>
<feature type="binding site" evidence="3">
    <location>
        <position position="378"/>
    </location>
    <ligand>
        <name>ATP</name>
        <dbReference type="ChEBI" id="CHEBI:30616"/>
    </ligand>
</feature>
<feature type="binding site" evidence="3">
    <location>
        <position position="378"/>
    </location>
    <ligand>
        <name>Mg(2+)</name>
        <dbReference type="ChEBI" id="CHEBI:18420"/>
    </ligand>
</feature>
<feature type="binding site" evidence="3">
    <location>
        <position position="379"/>
    </location>
    <ligand>
        <name>ATP</name>
        <dbReference type="ChEBI" id="CHEBI:30616"/>
    </ligand>
</feature>
<feature type="modified residue" description="Phosphotyrosine" evidence="1">
    <location>
        <position position="199"/>
    </location>
</feature>
<feature type="modified residue" description="Phosphoserine" evidence="1 2">
    <location>
        <position position="206"/>
    </location>
</feature>
<feature type="modified residue" description="Phosphoserine" evidence="2">
    <location>
        <position position="393"/>
    </location>
</feature>
<comment type="catalytic activity">
    <reaction evidence="1">
        <text>(2R)-3-phosphoglycerate + ATP = (2R)-3-phospho-glyceroyl phosphate + ADP</text>
        <dbReference type="Rhea" id="RHEA:14801"/>
        <dbReference type="ChEBI" id="CHEBI:30616"/>
        <dbReference type="ChEBI" id="CHEBI:57604"/>
        <dbReference type="ChEBI" id="CHEBI:58272"/>
        <dbReference type="ChEBI" id="CHEBI:456216"/>
        <dbReference type="EC" id="2.7.2.3"/>
    </reaction>
</comment>
<comment type="cofactor">
    <cofactor evidence="1">
        <name>Mg(2+)</name>
        <dbReference type="ChEBI" id="CHEBI:18420"/>
    </cofactor>
</comment>
<comment type="pathway">
    <text evidence="1">Carbohydrate degradation; glycolysis; pyruvate from D-glyceraldehyde 3-phosphate: step 2/5.</text>
</comment>
<comment type="subunit">
    <text evidence="1 7">Monomer. Interacts with calmodulin in the presence of Ca(2+).</text>
</comment>
<comment type="subcellular location">
    <subcellularLocation>
        <location evidence="1">Cytoplasm</location>
    </subcellularLocation>
</comment>
<comment type="developmental stage">
    <text evidence="5 6">Expressed during development. Expression levels decrease steadily from the initiation of development until culmination. Levels increase after 18 hours of development and peak at 22 hours, after which they decrease again.</text>
</comment>
<comment type="similarity">
    <text evidence="4">Belongs to the phosphoglycerate kinase family.</text>
</comment>
<reference evidence="9 10" key="1">
    <citation type="journal article" date="2004" name="Biochim. Biophys. Acta">
        <title>Calmodulin binds to and inhibits the activity of phosphoglycerate kinase.</title>
        <authorList>
            <person name="Myre M.A."/>
            <person name="O'Day D.H."/>
        </authorList>
    </citation>
    <scope>NUCLEOTIDE SEQUENCE [MRNA]</scope>
    <scope>INTERACTION WITH CALMODULIN</scope>
</reference>
<reference evidence="9 11" key="2">
    <citation type="journal article" date="2005" name="Nature">
        <title>The genome of the social amoeba Dictyostelium discoideum.</title>
        <authorList>
            <person name="Eichinger L."/>
            <person name="Pachebat J.A."/>
            <person name="Gloeckner G."/>
            <person name="Rajandream M.A."/>
            <person name="Sucgang R."/>
            <person name="Berriman M."/>
            <person name="Song J."/>
            <person name="Olsen R."/>
            <person name="Szafranski K."/>
            <person name="Xu Q."/>
            <person name="Tunggal B."/>
            <person name="Kummerfeld S."/>
            <person name="Madera M."/>
            <person name="Konfortov B.A."/>
            <person name="Rivero F."/>
            <person name="Bankier A.T."/>
            <person name="Lehmann R."/>
            <person name="Hamlin N."/>
            <person name="Davies R."/>
            <person name="Gaudet P."/>
            <person name="Fey P."/>
            <person name="Pilcher K."/>
            <person name="Chen G."/>
            <person name="Saunders D."/>
            <person name="Sodergren E.J."/>
            <person name="Davis P."/>
            <person name="Kerhornou A."/>
            <person name="Nie X."/>
            <person name="Hall N."/>
            <person name="Anjard C."/>
            <person name="Hemphill L."/>
            <person name="Bason N."/>
            <person name="Farbrother P."/>
            <person name="Desany B."/>
            <person name="Just E."/>
            <person name="Morio T."/>
            <person name="Rost R."/>
            <person name="Churcher C.M."/>
            <person name="Cooper J."/>
            <person name="Haydock S."/>
            <person name="van Driessche N."/>
            <person name="Cronin A."/>
            <person name="Goodhead I."/>
            <person name="Muzny D.M."/>
            <person name="Mourier T."/>
            <person name="Pain A."/>
            <person name="Lu M."/>
            <person name="Harper D."/>
            <person name="Lindsay R."/>
            <person name="Hauser H."/>
            <person name="James K.D."/>
            <person name="Quiles M."/>
            <person name="Madan Babu M."/>
            <person name="Saito T."/>
            <person name="Buchrieser C."/>
            <person name="Wardroper A."/>
            <person name="Felder M."/>
            <person name="Thangavelu M."/>
            <person name="Johnson D."/>
            <person name="Knights A."/>
            <person name="Loulseged H."/>
            <person name="Mungall K.L."/>
            <person name="Oliver K."/>
            <person name="Price C."/>
            <person name="Quail M.A."/>
            <person name="Urushihara H."/>
            <person name="Hernandez J."/>
            <person name="Rabbinowitsch E."/>
            <person name="Steffen D."/>
            <person name="Sanders M."/>
            <person name="Ma J."/>
            <person name="Kohara Y."/>
            <person name="Sharp S."/>
            <person name="Simmonds M.N."/>
            <person name="Spiegler S."/>
            <person name="Tivey A."/>
            <person name="Sugano S."/>
            <person name="White B."/>
            <person name="Walker D."/>
            <person name="Woodward J.R."/>
            <person name="Winckler T."/>
            <person name="Tanaka Y."/>
            <person name="Shaulsky G."/>
            <person name="Schleicher M."/>
            <person name="Weinstock G.M."/>
            <person name="Rosenthal A."/>
            <person name="Cox E.C."/>
            <person name="Chisholm R.L."/>
            <person name="Gibbs R.A."/>
            <person name="Loomis W.F."/>
            <person name="Platzer M."/>
            <person name="Kay R.R."/>
            <person name="Williams J.G."/>
            <person name="Dear P.H."/>
            <person name="Noegel A.A."/>
            <person name="Barrell B.G."/>
            <person name="Kuspa A."/>
        </authorList>
    </citation>
    <scope>NUCLEOTIDE SEQUENCE [LARGE SCALE GENOMIC DNA]</scope>
    <source>
        <strain evidence="8">AX4</strain>
    </source>
</reference>
<reference evidence="9" key="3">
    <citation type="journal article" date="2002" name="Development">
        <title>A transcriptional profile of multicellular development in Dictyostelium discoideum.</title>
        <authorList>
            <person name="Van Driessche N."/>
            <person name="Shaw C."/>
            <person name="Katoh M."/>
            <person name="Morio T."/>
            <person name="Sucgang R."/>
            <person name="Ibarra M."/>
            <person name="Kuwayama H."/>
            <person name="Saito T."/>
            <person name="Urushihara H."/>
            <person name="Maeda M."/>
            <person name="Takeuchi I."/>
            <person name="Ochiai H."/>
            <person name="Eaton W."/>
            <person name="Tollett J."/>
            <person name="Halter J."/>
            <person name="Kuspa A."/>
            <person name="Tanaka Y."/>
            <person name="Shaulsky G."/>
        </authorList>
    </citation>
    <scope>DEVELOPMENTAL STAGE</scope>
</reference>
<reference evidence="9" key="4">
    <citation type="journal article" date="2003" name="Eukaryot. Cell">
        <title>Genome-wide expression analyses of gene regulation during early development of Dictyostelium discoideum.</title>
        <authorList>
            <person name="Iranfar N."/>
            <person name="Fuller D."/>
            <person name="Loomis W.F."/>
        </authorList>
    </citation>
    <scope>DEVELOPMENTAL STAGE</scope>
</reference>
<reference key="5">
    <citation type="journal article" date="2006" name="Mol. Cell. Proteomics">
        <title>Proteomics fingerprinting of phagosome maturation and evidence for the role of a Galpha during uptake.</title>
        <authorList>
            <person name="Gotthardt D."/>
            <person name="Blancheteau V."/>
            <person name="Bosserhoff A."/>
            <person name="Ruppert T."/>
            <person name="Delorenzi M."/>
            <person name="Soldati T."/>
        </authorList>
    </citation>
    <scope>IDENTIFICATION BY MASS SPECTROMETRY [LARGE SCALE ANALYSIS]</scope>
    <source>
        <strain>AX2</strain>
    </source>
</reference>
<dbReference type="EC" id="2.7.2.3" evidence="1"/>
<dbReference type="EMBL" id="AF316577">
    <property type="protein sequence ID" value="AAG34561.2"/>
    <property type="molecule type" value="mRNA"/>
</dbReference>
<dbReference type="EMBL" id="AAFI02000103">
    <property type="protein sequence ID" value="EAL63606.1"/>
    <property type="molecule type" value="Genomic_DNA"/>
</dbReference>
<dbReference type="RefSeq" id="XP_637130.1">
    <property type="nucleotide sequence ID" value="XM_632038.1"/>
</dbReference>
<dbReference type="SMR" id="Q9GPM4"/>
<dbReference type="FunCoup" id="Q9GPM4">
    <property type="interactions" value="500"/>
</dbReference>
<dbReference type="STRING" id="44689.Q9GPM4"/>
<dbReference type="PaxDb" id="44689-DDB0191349"/>
<dbReference type="EnsemblProtists" id="EAL63606">
    <property type="protein sequence ID" value="EAL63606"/>
    <property type="gene ID" value="DDB_G0287595"/>
</dbReference>
<dbReference type="GeneID" id="8626225"/>
<dbReference type="KEGG" id="ddi:DDB_G0287595"/>
<dbReference type="dictyBase" id="DDB_G0287595">
    <property type="gene designation" value="pgkA"/>
</dbReference>
<dbReference type="VEuPathDB" id="AmoebaDB:DDB_G0287595"/>
<dbReference type="eggNOG" id="KOG1367">
    <property type="taxonomic scope" value="Eukaryota"/>
</dbReference>
<dbReference type="HOGENOM" id="CLU_025427_0_2_1"/>
<dbReference type="InParanoid" id="Q9GPM4"/>
<dbReference type="OMA" id="DMIFDIG"/>
<dbReference type="PhylomeDB" id="Q9GPM4"/>
<dbReference type="Reactome" id="R-DDI-70171">
    <property type="pathway name" value="Glycolysis"/>
</dbReference>
<dbReference type="Reactome" id="R-DDI-70263">
    <property type="pathway name" value="Gluconeogenesis"/>
</dbReference>
<dbReference type="UniPathway" id="UPA00109">
    <property type="reaction ID" value="UER00185"/>
</dbReference>
<dbReference type="PRO" id="PR:Q9GPM4"/>
<dbReference type="Proteomes" id="UP000002195">
    <property type="component" value="Chromosome 5"/>
</dbReference>
<dbReference type="GO" id="GO:0005737">
    <property type="term" value="C:cytoplasm"/>
    <property type="evidence" value="ECO:0000305"/>
    <property type="project" value="dictyBase"/>
</dbReference>
<dbReference type="GO" id="GO:0005829">
    <property type="term" value="C:cytosol"/>
    <property type="evidence" value="ECO:0000318"/>
    <property type="project" value="GO_Central"/>
</dbReference>
<dbReference type="GO" id="GO:0045121">
    <property type="term" value="C:membrane raft"/>
    <property type="evidence" value="ECO:0000314"/>
    <property type="project" value="dictyBase"/>
</dbReference>
<dbReference type="GO" id="GO:0045335">
    <property type="term" value="C:phagocytic vesicle"/>
    <property type="evidence" value="ECO:0007005"/>
    <property type="project" value="dictyBase"/>
</dbReference>
<dbReference type="GO" id="GO:0043531">
    <property type="term" value="F:ADP binding"/>
    <property type="evidence" value="ECO:0000318"/>
    <property type="project" value="GO_Central"/>
</dbReference>
<dbReference type="GO" id="GO:0005524">
    <property type="term" value="F:ATP binding"/>
    <property type="evidence" value="ECO:0000318"/>
    <property type="project" value="GO_Central"/>
</dbReference>
<dbReference type="GO" id="GO:0005516">
    <property type="term" value="F:calmodulin binding"/>
    <property type="evidence" value="ECO:0000314"/>
    <property type="project" value="dictyBase"/>
</dbReference>
<dbReference type="GO" id="GO:0046872">
    <property type="term" value="F:metal ion binding"/>
    <property type="evidence" value="ECO:0007669"/>
    <property type="project" value="UniProtKB-KW"/>
</dbReference>
<dbReference type="GO" id="GO:0004618">
    <property type="term" value="F:phosphoglycerate kinase activity"/>
    <property type="evidence" value="ECO:0000250"/>
    <property type="project" value="dictyBase"/>
</dbReference>
<dbReference type="GO" id="GO:0006094">
    <property type="term" value="P:gluconeogenesis"/>
    <property type="evidence" value="ECO:0000250"/>
    <property type="project" value="dictyBase"/>
</dbReference>
<dbReference type="GO" id="GO:0006096">
    <property type="term" value="P:glycolytic process"/>
    <property type="evidence" value="ECO:0000250"/>
    <property type="project" value="dictyBase"/>
</dbReference>
<dbReference type="CDD" id="cd00318">
    <property type="entry name" value="Phosphoglycerate_kinase"/>
    <property type="match status" value="1"/>
</dbReference>
<dbReference type="FunFam" id="3.40.50.1260:FF:000005">
    <property type="entry name" value="Phosphoglycerate kinase"/>
    <property type="match status" value="1"/>
</dbReference>
<dbReference type="FunFam" id="3.40.50.1260:FF:000032">
    <property type="entry name" value="Phosphoglycerate kinase"/>
    <property type="match status" value="1"/>
</dbReference>
<dbReference type="FunFam" id="3.40.50.1260:FF:000031">
    <property type="entry name" value="Phosphoglycerate kinase 1"/>
    <property type="match status" value="1"/>
</dbReference>
<dbReference type="Gene3D" id="3.40.50.1260">
    <property type="entry name" value="Phosphoglycerate kinase, N-terminal domain"/>
    <property type="match status" value="3"/>
</dbReference>
<dbReference type="HAMAP" id="MF_00145">
    <property type="entry name" value="Phosphoglyc_kinase"/>
    <property type="match status" value="1"/>
</dbReference>
<dbReference type="InterPro" id="IPR001576">
    <property type="entry name" value="Phosphoglycerate_kinase"/>
</dbReference>
<dbReference type="InterPro" id="IPR015911">
    <property type="entry name" value="Phosphoglycerate_kinase_CS"/>
</dbReference>
<dbReference type="InterPro" id="IPR015824">
    <property type="entry name" value="Phosphoglycerate_kinase_N"/>
</dbReference>
<dbReference type="InterPro" id="IPR036043">
    <property type="entry name" value="Phosphoglycerate_kinase_sf"/>
</dbReference>
<dbReference type="PANTHER" id="PTHR11406">
    <property type="entry name" value="PHOSPHOGLYCERATE KINASE"/>
    <property type="match status" value="1"/>
</dbReference>
<dbReference type="PANTHER" id="PTHR11406:SF0">
    <property type="entry name" value="PHOSPHOGLYCERATE KINASE"/>
    <property type="match status" value="1"/>
</dbReference>
<dbReference type="Pfam" id="PF00162">
    <property type="entry name" value="PGK"/>
    <property type="match status" value="1"/>
</dbReference>
<dbReference type="PIRSF" id="PIRSF000724">
    <property type="entry name" value="Pgk"/>
    <property type="match status" value="1"/>
</dbReference>
<dbReference type="PRINTS" id="PR00477">
    <property type="entry name" value="PHGLYCKINASE"/>
</dbReference>
<dbReference type="SUPFAM" id="SSF53748">
    <property type="entry name" value="Phosphoglycerate kinase"/>
    <property type="match status" value="1"/>
</dbReference>
<dbReference type="PROSITE" id="PS00111">
    <property type="entry name" value="PGLYCERATE_KINASE"/>
    <property type="match status" value="1"/>
</dbReference>
<protein>
    <recommendedName>
        <fullName>Phosphoglycerate kinase</fullName>
        <ecNumber evidence="1">2.7.2.3</ecNumber>
    </recommendedName>
</protein>
<gene>
    <name evidence="10" type="primary">pgkA</name>
    <name type="ORF">DDB_G0287595</name>
</gene>
<organism>
    <name type="scientific">Dictyostelium discoideum</name>
    <name type="common">Social amoeba</name>
    <dbReference type="NCBI Taxonomy" id="44689"/>
    <lineage>
        <taxon>Eukaryota</taxon>
        <taxon>Amoebozoa</taxon>
        <taxon>Evosea</taxon>
        <taxon>Eumycetozoa</taxon>
        <taxon>Dictyostelia</taxon>
        <taxon>Dictyosteliales</taxon>
        <taxon>Dictyosteliaceae</taxon>
        <taxon>Dictyostelium</taxon>
    </lineage>
</organism>
<sequence>MSSNKIGNKLSLDKVDVKGKRVLIRVDYNVPLDKNNNITSTQRIDASIPTLEYCLKNGAKSIVLMSHLGRPDGLVKPEYSLKPVVKVLEDQLKRPIKFLSDCVGEQVEKECANPEEGTVILLENLRFHIEEEGSGVDAEGKKVKANPEKVKEFRESLTKLGDVYVNDAFGTAHRAHSSMVGINLPQKAAGFLMKKELEYFAKALESPSKPFLAILGGAKVSDKIKLIENLLYKVDEMIIGGGMAFTFKKFIDNKEIGSSLFEKTAEQITKDIIAKAAKNNVKLHFPVDYVIADKFDNDANIKTVTQDQGIPEGWMGLDCGPETIKENRDTISRAKTIVWNGPMGVFEKSNFEAGTKAAMDDVVNATTNGAITIIGGGDTATCAAKYNTEDKVSHVSTGGGASLELLEGKELPGVTALSDL</sequence>
<accession>Q9GPM4</accession>
<accession>Q54K34</accession>
<proteinExistence type="evidence at protein level"/>
<keyword id="KW-0067">ATP-binding</keyword>
<keyword id="KW-0112">Calmodulin-binding</keyword>
<keyword id="KW-0963">Cytoplasm</keyword>
<keyword id="KW-0324">Glycolysis</keyword>
<keyword id="KW-0418">Kinase</keyword>
<keyword id="KW-0460">Magnesium</keyword>
<keyword id="KW-0479">Metal-binding</keyword>
<keyword id="KW-0547">Nucleotide-binding</keyword>
<keyword id="KW-0597">Phosphoprotein</keyword>
<keyword id="KW-1185">Reference proteome</keyword>
<keyword id="KW-0808">Transferase</keyword>
<evidence type="ECO:0000250" key="1">
    <source>
        <dbReference type="UniProtKB" id="P00558"/>
    </source>
</evidence>
<evidence type="ECO:0000250" key="2">
    <source>
        <dbReference type="UniProtKB" id="P09411"/>
    </source>
</evidence>
<evidence type="ECO:0000250" key="3">
    <source>
        <dbReference type="UniProtKB" id="Q7SIB7"/>
    </source>
</evidence>
<evidence type="ECO:0000255" key="4"/>
<evidence type="ECO:0000269" key="5">
    <source>
    </source>
</evidence>
<evidence type="ECO:0000269" key="6">
    <source>
    </source>
</evidence>
<evidence type="ECO:0000269" key="7">
    <source>
    </source>
</evidence>
<evidence type="ECO:0000269" key="8">
    <source>
    </source>
</evidence>
<evidence type="ECO:0000305" key="9"/>
<evidence type="ECO:0000312" key="10">
    <source>
        <dbReference type="EMBL" id="AAG34561.2"/>
    </source>
</evidence>
<evidence type="ECO:0000312" key="11">
    <source>
        <dbReference type="EMBL" id="EAL63606.1"/>
    </source>
</evidence>